<gene>
    <name evidence="1" type="primary">ccsA</name>
</gene>
<comment type="function">
    <text evidence="1">Required during biogenesis of c-type cytochromes (cytochrome c6 and cytochrome f) at the step of heme attachment.</text>
</comment>
<comment type="subunit">
    <text evidence="1">May interact with Ccs1.</text>
</comment>
<comment type="subcellular location">
    <subcellularLocation>
        <location evidence="1">Plastid</location>
        <location evidence="1">Chloroplast thylakoid membrane</location>
        <topology evidence="1">Multi-pass membrane protein</topology>
    </subcellularLocation>
</comment>
<comment type="similarity">
    <text evidence="1">Belongs to the CcmF/CycK/Ccl1/NrfE/CcsA family.</text>
</comment>
<name>CCSA_CRUWA</name>
<proteinExistence type="inferred from homology"/>
<keyword id="KW-0150">Chloroplast</keyword>
<keyword id="KW-0201">Cytochrome c-type biogenesis</keyword>
<keyword id="KW-0472">Membrane</keyword>
<keyword id="KW-0934">Plastid</keyword>
<keyword id="KW-0793">Thylakoid</keyword>
<keyword id="KW-0812">Transmembrane</keyword>
<keyword id="KW-1133">Transmembrane helix</keyword>
<dbReference type="EMBL" id="AP009372">
    <property type="protein sequence ID" value="BAF50338.1"/>
    <property type="molecule type" value="Genomic_DNA"/>
</dbReference>
<dbReference type="RefSeq" id="YP_001123513.1">
    <property type="nucleotide sequence ID" value="NC_009271.1"/>
</dbReference>
<dbReference type="SMR" id="A4QKY3"/>
<dbReference type="GeneID" id="4962716"/>
<dbReference type="GO" id="GO:0009535">
    <property type="term" value="C:chloroplast thylakoid membrane"/>
    <property type="evidence" value="ECO:0007669"/>
    <property type="project" value="UniProtKB-SubCell"/>
</dbReference>
<dbReference type="GO" id="GO:0005886">
    <property type="term" value="C:plasma membrane"/>
    <property type="evidence" value="ECO:0007669"/>
    <property type="project" value="TreeGrafter"/>
</dbReference>
<dbReference type="GO" id="GO:0020037">
    <property type="term" value="F:heme binding"/>
    <property type="evidence" value="ECO:0007669"/>
    <property type="project" value="InterPro"/>
</dbReference>
<dbReference type="GO" id="GO:0017004">
    <property type="term" value="P:cytochrome complex assembly"/>
    <property type="evidence" value="ECO:0007669"/>
    <property type="project" value="UniProtKB-UniRule"/>
</dbReference>
<dbReference type="HAMAP" id="MF_01391">
    <property type="entry name" value="CytC_CcsA"/>
    <property type="match status" value="1"/>
</dbReference>
<dbReference type="InterPro" id="IPR002541">
    <property type="entry name" value="Cyt_c_assembly"/>
</dbReference>
<dbReference type="InterPro" id="IPR017562">
    <property type="entry name" value="Cyt_c_biogenesis_CcsA"/>
</dbReference>
<dbReference type="InterPro" id="IPR045062">
    <property type="entry name" value="Cyt_c_biogenesis_CcsA/CcmC"/>
</dbReference>
<dbReference type="NCBIfam" id="TIGR03144">
    <property type="entry name" value="cytochr_II_ccsB"/>
    <property type="match status" value="1"/>
</dbReference>
<dbReference type="PANTHER" id="PTHR30071:SF1">
    <property type="entry name" value="CYTOCHROME B_B6 PROTEIN-RELATED"/>
    <property type="match status" value="1"/>
</dbReference>
<dbReference type="PANTHER" id="PTHR30071">
    <property type="entry name" value="HEME EXPORTER PROTEIN C"/>
    <property type="match status" value="1"/>
</dbReference>
<dbReference type="Pfam" id="PF01578">
    <property type="entry name" value="Cytochrom_C_asm"/>
    <property type="match status" value="1"/>
</dbReference>
<protein>
    <recommendedName>
        <fullName evidence="1">Cytochrome c biogenesis protein CcsA</fullName>
    </recommendedName>
</protein>
<accession>A4QKY3</accession>
<geneLocation type="chloroplast"/>
<evidence type="ECO:0000255" key="1">
    <source>
        <dbReference type="HAMAP-Rule" id="MF_01391"/>
    </source>
</evidence>
<feature type="chain" id="PRO_0000353743" description="Cytochrome c biogenesis protein CcsA">
    <location>
        <begin position="1"/>
        <end position="328"/>
    </location>
</feature>
<feature type="transmembrane region" description="Helical" evidence="1">
    <location>
        <begin position="13"/>
        <end position="33"/>
    </location>
</feature>
<feature type="transmembrane region" description="Helical" evidence="1">
    <location>
        <begin position="46"/>
        <end position="66"/>
    </location>
</feature>
<feature type="transmembrane region" description="Helical" evidence="1">
    <location>
        <begin position="73"/>
        <end position="93"/>
    </location>
</feature>
<feature type="transmembrane region" description="Helical" evidence="1">
    <location>
        <begin position="101"/>
        <end position="121"/>
    </location>
</feature>
<feature type="transmembrane region" description="Helical" evidence="1">
    <location>
        <begin position="146"/>
        <end position="166"/>
    </location>
</feature>
<feature type="transmembrane region" description="Helical" evidence="1">
    <location>
        <begin position="234"/>
        <end position="254"/>
    </location>
</feature>
<feature type="transmembrane region" description="Helical" evidence="1">
    <location>
        <begin position="263"/>
        <end position="283"/>
    </location>
</feature>
<feature type="transmembrane region" description="Helical" evidence="1">
    <location>
        <begin position="295"/>
        <end position="315"/>
    </location>
</feature>
<sequence length="328" mass="37673">MIFSILEHILTHISFSVVSIVLTIYFLTLLVNLDEIIGFFDSLDKGIIITFFGITGLLFTRWIYSGHFPLSNLYESLIFLSWAFSIIHMVSYFNKKQQNHLNAITAPSAIFIQGFATSGLLNKMPQSAILVPALQSQWLMMHVSLMILGYGALLCGSLLSIALLVITFRKVGPTFWKKNIKKNFLLNELFSFDVLYYINERNSILLQQNITFSFSKNYYRYQLIQQLDYWSFRIISLGFIFLTVGILSGAVWANETWGSYWNWDPKETWAFITWTIFAIYLHIKTNRNVRGINSAIVASIGFLLIWICYFGVILLGIGLHSYGSFTSN</sequence>
<reference key="1">
    <citation type="submission" date="2007-03" db="EMBL/GenBank/DDBJ databases">
        <title>Sequencing analysis of Crucihimalaya wallichii chloroplast DNA.</title>
        <authorList>
            <person name="Hosouchi T."/>
            <person name="Tsuruoka H."/>
            <person name="Kotani H."/>
        </authorList>
    </citation>
    <scope>NUCLEOTIDE SEQUENCE [LARGE SCALE GENOMIC DNA]</scope>
</reference>
<organism>
    <name type="scientific">Crucihimalaya wallichii</name>
    <name type="common">Rock-cress</name>
    <name type="synonym">Arabidopsis campestris</name>
    <dbReference type="NCBI Taxonomy" id="78192"/>
    <lineage>
        <taxon>Eukaryota</taxon>
        <taxon>Viridiplantae</taxon>
        <taxon>Streptophyta</taxon>
        <taxon>Embryophyta</taxon>
        <taxon>Tracheophyta</taxon>
        <taxon>Spermatophyta</taxon>
        <taxon>Magnoliopsida</taxon>
        <taxon>eudicotyledons</taxon>
        <taxon>Gunneridae</taxon>
        <taxon>Pentapetalae</taxon>
        <taxon>rosids</taxon>
        <taxon>malvids</taxon>
        <taxon>Brassicales</taxon>
        <taxon>Brassicaceae</taxon>
        <taxon>Crucihimalayeae</taxon>
        <taxon>Crucihimalaya</taxon>
    </lineage>
</organism>